<comment type="function">
    <text evidence="1">Catalyzes the NADPH-dependent reduction of L-glutamate 5-phosphate into L-glutamate 5-semialdehyde and phosphate. The product spontaneously undergoes cyclization to form 1-pyrroline-5-carboxylate.</text>
</comment>
<comment type="catalytic activity">
    <reaction evidence="1">
        <text>L-glutamate 5-semialdehyde + phosphate + NADP(+) = L-glutamyl 5-phosphate + NADPH + H(+)</text>
        <dbReference type="Rhea" id="RHEA:19541"/>
        <dbReference type="ChEBI" id="CHEBI:15378"/>
        <dbReference type="ChEBI" id="CHEBI:43474"/>
        <dbReference type="ChEBI" id="CHEBI:57783"/>
        <dbReference type="ChEBI" id="CHEBI:58066"/>
        <dbReference type="ChEBI" id="CHEBI:58274"/>
        <dbReference type="ChEBI" id="CHEBI:58349"/>
        <dbReference type="EC" id="1.2.1.41"/>
    </reaction>
</comment>
<comment type="pathway">
    <text evidence="1">Amino-acid biosynthesis; L-proline biosynthesis; L-glutamate 5-semialdehyde from L-glutamate: step 2/2.</text>
</comment>
<comment type="subcellular location">
    <subcellularLocation>
        <location evidence="1">Cytoplasm</location>
    </subcellularLocation>
</comment>
<comment type="similarity">
    <text evidence="1">Belongs to the gamma-glutamyl phosphate reductase family.</text>
</comment>
<proteinExistence type="inferred from homology"/>
<reference key="1">
    <citation type="journal article" date="2008" name="Appl. Environ. Microbiol.">
        <title>Genome of the epsilonproteobacterial chemolithoautotroph Sulfurimonas denitrificans.</title>
        <authorList>
            <person name="Sievert S.M."/>
            <person name="Scott K.M."/>
            <person name="Klotz M.G."/>
            <person name="Chain P.S.G."/>
            <person name="Hauser L.J."/>
            <person name="Hemp J."/>
            <person name="Huegler M."/>
            <person name="Land M."/>
            <person name="Lapidus A."/>
            <person name="Larimer F.W."/>
            <person name="Lucas S."/>
            <person name="Malfatti S.A."/>
            <person name="Meyer F."/>
            <person name="Paulsen I.T."/>
            <person name="Ren Q."/>
            <person name="Simon J."/>
            <person name="Bailey K."/>
            <person name="Diaz E."/>
            <person name="Fitzpatrick K.A."/>
            <person name="Glover B."/>
            <person name="Gwatney N."/>
            <person name="Korajkic A."/>
            <person name="Long A."/>
            <person name="Mobberley J.M."/>
            <person name="Pantry S.N."/>
            <person name="Pazder G."/>
            <person name="Peterson S."/>
            <person name="Quintanilla J.D."/>
            <person name="Sprinkle R."/>
            <person name="Stephens J."/>
            <person name="Thomas P."/>
            <person name="Vaughn R."/>
            <person name="Weber M.J."/>
            <person name="Wooten L.L."/>
        </authorList>
    </citation>
    <scope>NUCLEOTIDE SEQUENCE [LARGE SCALE GENOMIC DNA]</scope>
    <source>
        <strain>ATCC 33889 / DSM 1251</strain>
    </source>
</reference>
<evidence type="ECO:0000255" key="1">
    <source>
        <dbReference type="HAMAP-Rule" id="MF_00412"/>
    </source>
</evidence>
<keyword id="KW-0028">Amino-acid biosynthesis</keyword>
<keyword id="KW-0963">Cytoplasm</keyword>
<keyword id="KW-0521">NADP</keyword>
<keyword id="KW-0560">Oxidoreductase</keyword>
<keyword id="KW-0641">Proline biosynthesis</keyword>
<keyword id="KW-1185">Reference proteome</keyword>
<dbReference type="EC" id="1.2.1.41" evidence="1"/>
<dbReference type="EMBL" id="CP000153">
    <property type="protein sequence ID" value="ABB44071.1"/>
    <property type="molecule type" value="Genomic_DNA"/>
</dbReference>
<dbReference type="RefSeq" id="WP_011372424.1">
    <property type="nucleotide sequence ID" value="NC_007575.1"/>
</dbReference>
<dbReference type="SMR" id="Q30SG0"/>
<dbReference type="STRING" id="326298.Suden_0792"/>
<dbReference type="KEGG" id="tdn:Suden_0792"/>
<dbReference type="eggNOG" id="COG0014">
    <property type="taxonomic scope" value="Bacteria"/>
</dbReference>
<dbReference type="HOGENOM" id="CLU_030231_0_0_7"/>
<dbReference type="OrthoDB" id="9809970at2"/>
<dbReference type="UniPathway" id="UPA00098">
    <property type="reaction ID" value="UER00360"/>
</dbReference>
<dbReference type="Proteomes" id="UP000002714">
    <property type="component" value="Chromosome"/>
</dbReference>
<dbReference type="GO" id="GO:0005737">
    <property type="term" value="C:cytoplasm"/>
    <property type="evidence" value="ECO:0007669"/>
    <property type="project" value="UniProtKB-SubCell"/>
</dbReference>
<dbReference type="GO" id="GO:0004350">
    <property type="term" value="F:glutamate-5-semialdehyde dehydrogenase activity"/>
    <property type="evidence" value="ECO:0007669"/>
    <property type="project" value="UniProtKB-UniRule"/>
</dbReference>
<dbReference type="GO" id="GO:0050661">
    <property type="term" value="F:NADP binding"/>
    <property type="evidence" value="ECO:0007669"/>
    <property type="project" value="InterPro"/>
</dbReference>
<dbReference type="GO" id="GO:0055129">
    <property type="term" value="P:L-proline biosynthetic process"/>
    <property type="evidence" value="ECO:0007669"/>
    <property type="project" value="UniProtKB-UniRule"/>
</dbReference>
<dbReference type="CDD" id="cd07079">
    <property type="entry name" value="ALDH_F18-19_ProA-GPR"/>
    <property type="match status" value="1"/>
</dbReference>
<dbReference type="FunFam" id="3.40.309.10:FF:000006">
    <property type="entry name" value="Gamma-glutamyl phosphate reductase"/>
    <property type="match status" value="1"/>
</dbReference>
<dbReference type="Gene3D" id="3.40.605.10">
    <property type="entry name" value="Aldehyde Dehydrogenase, Chain A, domain 1"/>
    <property type="match status" value="1"/>
</dbReference>
<dbReference type="Gene3D" id="3.40.309.10">
    <property type="entry name" value="Aldehyde Dehydrogenase, Chain A, domain 2"/>
    <property type="match status" value="1"/>
</dbReference>
<dbReference type="HAMAP" id="MF_00412">
    <property type="entry name" value="ProA"/>
    <property type="match status" value="1"/>
</dbReference>
<dbReference type="InterPro" id="IPR016161">
    <property type="entry name" value="Ald_DH/histidinol_DH"/>
</dbReference>
<dbReference type="InterPro" id="IPR016163">
    <property type="entry name" value="Ald_DH_C"/>
</dbReference>
<dbReference type="InterPro" id="IPR016162">
    <property type="entry name" value="Ald_DH_N"/>
</dbReference>
<dbReference type="InterPro" id="IPR015590">
    <property type="entry name" value="Aldehyde_DH_dom"/>
</dbReference>
<dbReference type="InterPro" id="IPR020593">
    <property type="entry name" value="G-glutamylP_reductase_CS"/>
</dbReference>
<dbReference type="InterPro" id="IPR012134">
    <property type="entry name" value="Glu-5-SA_DH"/>
</dbReference>
<dbReference type="InterPro" id="IPR000965">
    <property type="entry name" value="GPR_dom"/>
</dbReference>
<dbReference type="NCBIfam" id="NF001221">
    <property type="entry name" value="PRK00197.1"/>
    <property type="match status" value="1"/>
</dbReference>
<dbReference type="NCBIfam" id="TIGR00407">
    <property type="entry name" value="proA"/>
    <property type="match status" value="1"/>
</dbReference>
<dbReference type="PANTHER" id="PTHR11063:SF8">
    <property type="entry name" value="DELTA-1-PYRROLINE-5-CARBOXYLATE SYNTHASE"/>
    <property type="match status" value="1"/>
</dbReference>
<dbReference type="PANTHER" id="PTHR11063">
    <property type="entry name" value="GLUTAMATE SEMIALDEHYDE DEHYDROGENASE"/>
    <property type="match status" value="1"/>
</dbReference>
<dbReference type="Pfam" id="PF00171">
    <property type="entry name" value="Aldedh"/>
    <property type="match status" value="1"/>
</dbReference>
<dbReference type="PIRSF" id="PIRSF000151">
    <property type="entry name" value="GPR"/>
    <property type="match status" value="1"/>
</dbReference>
<dbReference type="SUPFAM" id="SSF53720">
    <property type="entry name" value="ALDH-like"/>
    <property type="match status" value="1"/>
</dbReference>
<dbReference type="PROSITE" id="PS01223">
    <property type="entry name" value="PROA"/>
    <property type="match status" value="1"/>
</dbReference>
<sequence>MEKFLQEAKSASRVLSLLSGAKKNRVLKEMANALRVNKADLIDANALDMADGKKNSLSLALMDRLLLDEVRIEAMAVAIEEIAALKEPVGRVLDGWVTEAGLKIEKVSIPIGVIGIIYESRPNVTSDTAALCFKSSNVCVLKGGKEAQNSNEAIAKVLQATLEKNSLPKSLISLVPDSSREGVAKLIKMDKYVDLIIPRGGEGLIKYVCDNATVSVVKHDKGQCHTYIDKEAILEDAIKIAINAKTQRPGVCNAMETLLVDSAIAKSALPLIKAEFDKANTKLKGCLKTQEIIDVESVTEEDYDTEYLDNILNMRVVDGVEEAIEHIVRFGSGHSEAIVTQNVTTAEKFLNSIDAAAVYLNASTRFTDGGSFGFGAEVGISTNKLHARGPMGIEGLTTYKYKIYGSGQTR</sequence>
<organism>
    <name type="scientific">Sulfurimonas denitrificans (strain ATCC 33889 / DSM 1251)</name>
    <name type="common">Thiomicrospira denitrificans (strain ATCC 33889 / DSM 1251)</name>
    <dbReference type="NCBI Taxonomy" id="326298"/>
    <lineage>
        <taxon>Bacteria</taxon>
        <taxon>Pseudomonadati</taxon>
        <taxon>Campylobacterota</taxon>
        <taxon>Epsilonproteobacteria</taxon>
        <taxon>Campylobacterales</taxon>
        <taxon>Sulfurimonadaceae</taxon>
        <taxon>Sulfurimonas</taxon>
    </lineage>
</organism>
<gene>
    <name evidence="1" type="primary">proA</name>
    <name type="ordered locus">Suden_0792</name>
</gene>
<feature type="chain" id="PRO_0000230030" description="Gamma-glutamyl phosphate reductase">
    <location>
        <begin position="1"/>
        <end position="410"/>
    </location>
</feature>
<accession>Q30SG0</accession>
<name>PROA_SULDN</name>
<protein>
    <recommendedName>
        <fullName evidence="1">Gamma-glutamyl phosphate reductase</fullName>
        <shortName evidence="1">GPR</shortName>
        <ecNumber evidence="1">1.2.1.41</ecNumber>
    </recommendedName>
    <alternativeName>
        <fullName evidence="1">Glutamate-5-semialdehyde dehydrogenase</fullName>
    </alternativeName>
    <alternativeName>
        <fullName evidence="1">Glutamyl-gamma-semialdehyde dehydrogenase</fullName>
        <shortName evidence="1">GSA dehydrogenase</shortName>
    </alternativeName>
</protein>